<reference key="1">
    <citation type="journal article" date="1989" name="Gene">
        <title>Nucleotide sequence of the Saccharomyces cerevisiae PUT4 proline-permease-encoding gene: similarities between CAN1, HIP1 and PUT4 permeases.</title>
        <authorList>
            <person name="Vandenbol M."/>
            <person name="Jauniaux J.-C."/>
            <person name="Grenson M."/>
        </authorList>
    </citation>
    <scope>NUCLEOTIDE SEQUENCE [GENOMIC DNA]</scope>
</reference>
<reference key="2">
    <citation type="journal article" date="1996" name="Yeast">
        <title>Nucleotide sequence analysis of a 40 kb segment on the right arm of yeast chromosome XV reveals 18 open reading frames including a new pyruvate kinase and three homologues to chromosome I genes.</title>
        <authorList>
            <person name="Purnelle B."/>
            <person name="Goffeau A."/>
        </authorList>
    </citation>
    <scope>NUCLEOTIDE SEQUENCE [GENOMIC DNA]</scope>
    <source>
        <strain>ATCC 90843 / S288c / FY73</strain>
    </source>
</reference>
<reference key="3">
    <citation type="journal article" date="1997" name="Nature">
        <title>The nucleotide sequence of Saccharomyces cerevisiae chromosome XV.</title>
        <authorList>
            <person name="Dujon B."/>
            <person name="Albermann K."/>
            <person name="Aldea M."/>
            <person name="Alexandraki D."/>
            <person name="Ansorge W."/>
            <person name="Arino J."/>
            <person name="Benes V."/>
            <person name="Bohn C."/>
            <person name="Bolotin-Fukuhara M."/>
            <person name="Bordonne R."/>
            <person name="Boyer J."/>
            <person name="Camasses A."/>
            <person name="Casamayor A."/>
            <person name="Casas C."/>
            <person name="Cheret G."/>
            <person name="Cziepluch C."/>
            <person name="Daignan-Fornier B."/>
            <person name="Dang V.-D."/>
            <person name="de Haan M."/>
            <person name="Delius H."/>
            <person name="Durand P."/>
            <person name="Fairhead C."/>
            <person name="Feldmann H."/>
            <person name="Gaillon L."/>
            <person name="Galisson F."/>
            <person name="Gamo F.-J."/>
            <person name="Gancedo C."/>
            <person name="Goffeau A."/>
            <person name="Goulding S.E."/>
            <person name="Grivell L.A."/>
            <person name="Habbig B."/>
            <person name="Hand N.J."/>
            <person name="Hani J."/>
            <person name="Hattenhorst U."/>
            <person name="Hebling U."/>
            <person name="Hernando Y."/>
            <person name="Herrero E."/>
            <person name="Heumann K."/>
            <person name="Hiesel R."/>
            <person name="Hilger F."/>
            <person name="Hofmann B."/>
            <person name="Hollenberg C.P."/>
            <person name="Hughes B."/>
            <person name="Jauniaux J.-C."/>
            <person name="Kalogeropoulos A."/>
            <person name="Katsoulou C."/>
            <person name="Kordes E."/>
            <person name="Lafuente M.J."/>
            <person name="Landt O."/>
            <person name="Louis E.J."/>
            <person name="Maarse A.C."/>
            <person name="Madania A."/>
            <person name="Mannhaupt G."/>
            <person name="Marck C."/>
            <person name="Martin R.P."/>
            <person name="Mewes H.-W."/>
            <person name="Michaux G."/>
            <person name="Paces V."/>
            <person name="Parle-McDermott A.G."/>
            <person name="Pearson B.M."/>
            <person name="Perrin A."/>
            <person name="Pettersson B."/>
            <person name="Poch O."/>
            <person name="Pohl T.M."/>
            <person name="Poirey R."/>
            <person name="Portetelle D."/>
            <person name="Pujol A."/>
            <person name="Purnelle B."/>
            <person name="Ramezani Rad M."/>
            <person name="Rechmann S."/>
            <person name="Schwager C."/>
            <person name="Schweizer M."/>
            <person name="Sor F."/>
            <person name="Sterky F."/>
            <person name="Tarassov I.A."/>
            <person name="Teodoru C."/>
            <person name="Tettelin H."/>
            <person name="Thierry A."/>
            <person name="Tobiasch E."/>
            <person name="Tzermia M."/>
            <person name="Uhlen M."/>
            <person name="Unseld M."/>
            <person name="Valens M."/>
            <person name="Vandenbol M."/>
            <person name="Vetter I."/>
            <person name="Vlcek C."/>
            <person name="Voet M."/>
            <person name="Volckaert G."/>
            <person name="Voss H."/>
            <person name="Wambutt R."/>
            <person name="Wedler H."/>
            <person name="Wiemann S."/>
            <person name="Winsor B."/>
            <person name="Wolfe K.H."/>
            <person name="Zollner A."/>
            <person name="Zumstein E."/>
            <person name="Kleine K."/>
        </authorList>
    </citation>
    <scope>NUCLEOTIDE SEQUENCE [LARGE SCALE GENOMIC DNA]</scope>
    <source>
        <strain>ATCC 204508 / S288c</strain>
    </source>
</reference>
<reference key="4">
    <citation type="journal article" date="2014" name="G3 (Bethesda)">
        <title>The reference genome sequence of Saccharomyces cerevisiae: Then and now.</title>
        <authorList>
            <person name="Engel S.R."/>
            <person name="Dietrich F.S."/>
            <person name="Fisk D.G."/>
            <person name="Binkley G."/>
            <person name="Balakrishnan R."/>
            <person name="Costanzo M.C."/>
            <person name="Dwight S.S."/>
            <person name="Hitz B.C."/>
            <person name="Karra K."/>
            <person name="Nash R.S."/>
            <person name="Weng S."/>
            <person name="Wong E.D."/>
            <person name="Lloyd P."/>
            <person name="Skrzypek M.S."/>
            <person name="Miyasato S.R."/>
            <person name="Simison M."/>
            <person name="Cherry J.M."/>
        </authorList>
    </citation>
    <scope>GENOME REANNOTATION</scope>
    <source>
        <strain>ATCC 204508 / S288c</strain>
    </source>
</reference>
<reference key="5">
    <citation type="journal article" date="1999" name="Curr. Genet.">
        <title>Substrate specificity and gene expression of the amino-acid permeases in Saccharomyces cerevisiae.</title>
        <authorList>
            <person name="Regenberg B."/>
            <person name="During-Olsen L."/>
            <person name="Kielland-Brandt M.C."/>
            <person name="Holmberg S."/>
        </authorList>
    </citation>
    <scope>FUNCTION</scope>
</reference>
<feature type="chain" id="PRO_0000054158" description="Proline-specific permease">
    <location>
        <begin position="1"/>
        <end position="627"/>
    </location>
</feature>
<feature type="transmembrane region" description="Helical" evidence="1">
    <location>
        <begin position="115"/>
        <end position="136"/>
    </location>
</feature>
<feature type="transmembrane region" description="Helical" evidence="1">
    <location>
        <begin position="142"/>
        <end position="162"/>
    </location>
</feature>
<feature type="transmembrane region" description="Helical" evidence="1">
    <location>
        <begin position="191"/>
        <end position="210"/>
    </location>
</feature>
<feature type="transmembrane region" description="Helical" evidence="1">
    <location>
        <begin position="229"/>
        <end position="247"/>
    </location>
</feature>
<feature type="transmembrane region" description="Helical" evidence="1">
    <location>
        <begin position="262"/>
        <end position="281"/>
    </location>
</feature>
<feature type="transmembrane region" description="Helical" evidence="1">
    <location>
        <begin position="306"/>
        <end position="326"/>
    </location>
</feature>
<feature type="transmembrane region" description="Helical" evidence="1">
    <location>
        <begin position="351"/>
        <end position="370"/>
    </location>
</feature>
<feature type="transmembrane region" description="Helical" evidence="1">
    <location>
        <begin position="408"/>
        <end position="427"/>
    </location>
</feature>
<feature type="transmembrane region" description="Helical" evidence="1">
    <location>
        <begin position="455"/>
        <end position="473"/>
    </location>
</feature>
<feature type="transmembrane region" description="Helical" evidence="1">
    <location>
        <begin position="483"/>
        <end position="503"/>
    </location>
</feature>
<feature type="transmembrane region" description="Helical" evidence="1">
    <location>
        <begin position="522"/>
        <end position="542"/>
    </location>
</feature>
<feature type="transmembrane region" description="Helical" evidence="1">
    <location>
        <begin position="558"/>
        <end position="578"/>
    </location>
</feature>
<feature type="region of interest" description="Disordered" evidence="2">
    <location>
        <begin position="19"/>
        <end position="77"/>
    </location>
</feature>
<feature type="compositionally biased region" description="Polar residues" evidence="2">
    <location>
        <begin position="42"/>
        <end position="51"/>
    </location>
</feature>
<feature type="compositionally biased region" description="Basic and acidic residues" evidence="2">
    <location>
        <begin position="54"/>
        <end position="70"/>
    </location>
</feature>
<feature type="glycosylation site" description="N-linked (GlcNAc...) asparagine" evidence="1">
    <location>
        <position position="72"/>
    </location>
</feature>
<feature type="glycosylation site" description="N-linked (GlcNAc...) asparagine" evidence="1">
    <location>
        <position position="78"/>
    </location>
</feature>
<feature type="sequence conflict" description="In Ref. 1; AAA34925." evidence="4" ref="1">
    <original>D</original>
    <variation>N</variation>
    <location>
        <position position="38"/>
    </location>
</feature>
<accession>P15380</accession>
<accession>D6W343</accession>
<evidence type="ECO:0000255" key="1"/>
<evidence type="ECO:0000256" key="2">
    <source>
        <dbReference type="SAM" id="MobiDB-lite"/>
    </source>
</evidence>
<evidence type="ECO:0000269" key="3">
    <source>
    </source>
</evidence>
<evidence type="ECO:0000305" key="4"/>
<sequence>MVNILPFHKNNRHSAGVVTCADDVSGDGSGGDTKKEEDVVQVTESPSSGSRNNHRSDNEKDDAIRMEKISKNQSASSNGTIREDLIMDVDLEKSPSVDGDSEPHKLKQGLQSRHVQLIALGGAIGTGLLVGTSSTLHTCGPAGLFISYIIISAVIYPIMCALGEMVCFLPGDGSDSAGSTANLVTRYVDPSLGFATGWNYFYCYVILVAAECTAASGVVEYWTTAVPKGVWITIFLCVVVILNFSAVKVYGESEFWFASIKILCIVGLIILSFILFWGGGPNHDRLGFRYWQHPGAFAHHLTGGSLGNFTDIYTGIIKGAFAFILGPELVCMTSAECADQRRNIAKASRRFVWRLIFFYVLGTLAISVIVPYNDPTLVNALAQGKPGAGSSPFVIGIQNAGIKVLPHIINGCILTSAWSAANAFMFASTRSLLTMAQTGQAPKCLGRINKWGVPYVAVGVSFLCSCLAYLNVSSSTADVFNWFSNISTISGFLGWMCGCIAYLRFRKAIFYNGLYDRLPFKTWGQPYTVWFSLIVIGIITITNGYAIFIPKYWRVADFIAAYITLPIFLVLWFGHKLYTRTWRQWWLPVSEIDVTTGLVEIEEKSREIEEMRLPPTGFKDKFLDALL</sequence>
<dbReference type="EMBL" id="M30583">
    <property type="protein sequence ID" value="AAA34925.1"/>
    <property type="molecule type" value="Genomic_DNA"/>
</dbReference>
<dbReference type="EMBL" id="X95720">
    <property type="protein sequence ID" value="CAA65035.1"/>
    <property type="molecule type" value="Genomic_DNA"/>
</dbReference>
<dbReference type="EMBL" id="Z75256">
    <property type="protein sequence ID" value="CAA99676.1"/>
    <property type="molecule type" value="Genomic_DNA"/>
</dbReference>
<dbReference type="EMBL" id="BK006948">
    <property type="protein sequence ID" value="DAA11109.1"/>
    <property type="molecule type" value="Genomic_DNA"/>
</dbReference>
<dbReference type="PIR" id="S67257">
    <property type="entry name" value="S67257"/>
</dbReference>
<dbReference type="RefSeq" id="NP_014993.1">
    <property type="nucleotide sequence ID" value="NM_001183768.1"/>
</dbReference>
<dbReference type="SMR" id="P15380"/>
<dbReference type="BioGRID" id="34733">
    <property type="interactions" value="83"/>
</dbReference>
<dbReference type="DIP" id="DIP-1541N"/>
<dbReference type="FunCoup" id="P15380">
    <property type="interactions" value="218"/>
</dbReference>
<dbReference type="IntAct" id="P15380">
    <property type="interactions" value="6"/>
</dbReference>
<dbReference type="MINT" id="P15380"/>
<dbReference type="STRING" id="4932.YOR348C"/>
<dbReference type="TCDB" id="2.A.3.10.3">
    <property type="family name" value="the amino acid-polyamine-organocation (apc) family"/>
</dbReference>
<dbReference type="GlyCosmos" id="P15380">
    <property type="glycosylation" value="2 sites, No reported glycans"/>
</dbReference>
<dbReference type="GlyGen" id="P15380">
    <property type="glycosylation" value="2 sites"/>
</dbReference>
<dbReference type="iPTMnet" id="P15380"/>
<dbReference type="PaxDb" id="4932-YOR348C"/>
<dbReference type="PeptideAtlas" id="P15380"/>
<dbReference type="EnsemblFungi" id="YOR348C_mRNA">
    <property type="protein sequence ID" value="YOR348C"/>
    <property type="gene ID" value="YOR348C"/>
</dbReference>
<dbReference type="GeneID" id="854530"/>
<dbReference type="KEGG" id="sce:YOR348C"/>
<dbReference type="AGR" id="SGD:S000005875"/>
<dbReference type="SGD" id="S000005875">
    <property type="gene designation" value="PUT4"/>
</dbReference>
<dbReference type="VEuPathDB" id="FungiDB:YOR348C"/>
<dbReference type="eggNOG" id="KOG1286">
    <property type="taxonomic scope" value="Eukaryota"/>
</dbReference>
<dbReference type="HOGENOM" id="CLU_007946_12_1_1"/>
<dbReference type="InParanoid" id="P15380"/>
<dbReference type="OMA" id="AIMCIVP"/>
<dbReference type="OrthoDB" id="3900342at2759"/>
<dbReference type="BioCyc" id="YEAST:G3O-33820-MONOMER"/>
<dbReference type="BioGRID-ORCS" id="854530">
    <property type="hits" value="0 hits in 10 CRISPR screens"/>
</dbReference>
<dbReference type="PRO" id="PR:P15380"/>
<dbReference type="Proteomes" id="UP000002311">
    <property type="component" value="Chromosome XV"/>
</dbReference>
<dbReference type="RNAct" id="P15380">
    <property type="molecule type" value="protein"/>
</dbReference>
<dbReference type="GO" id="GO:0016020">
    <property type="term" value="C:membrane"/>
    <property type="evidence" value="ECO:0000318"/>
    <property type="project" value="GO_Central"/>
</dbReference>
<dbReference type="GO" id="GO:0005886">
    <property type="term" value="C:plasma membrane"/>
    <property type="evidence" value="ECO:0000314"/>
    <property type="project" value="SGD"/>
</dbReference>
<dbReference type="GO" id="GO:0015171">
    <property type="term" value="F:amino acid transmembrane transporter activity"/>
    <property type="evidence" value="ECO:0000318"/>
    <property type="project" value="GO_Central"/>
</dbReference>
<dbReference type="GO" id="GO:0015193">
    <property type="term" value="F:L-proline transmembrane transporter activity"/>
    <property type="evidence" value="ECO:0000315"/>
    <property type="project" value="SGD"/>
</dbReference>
<dbReference type="GO" id="GO:0015175">
    <property type="term" value="F:neutral L-amino acid transmembrane transporter activity"/>
    <property type="evidence" value="ECO:0000314"/>
    <property type="project" value="SGD"/>
</dbReference>
<dbReference type="GO" id="GO:0003333">
    <property type="term" value="P:amino acid transmembrane transport"/>
    <property type="evidence" value="ECO:0000318"/>
    <property type="project" value="GO_Central"/>
</dbReference>
<dbReference type="GO" id="GO:0015812">
    <property type="term" value="P:gamma-aminobutyric acid transport"/>
    <property type="evidence" value="ECO:0000314"/>
    <property type="project" value="SGD"/>
</dbReference>
<dbReference type="GO" id="GO:0015804">
    <property type="term" value="P:neutral amino acid transport"/>
    <property type="evidence" value="ECO:0000314"/>
    <property type="project" value="SGD"/>
</dbReference>
<dbReference type="GO" id="GO:0015824">
    <property type="term" value="P:proline transport"/>
    <property type="evidence" value="ECO:0000314"/>
    <property type="project" value="SGD"/>
</dbReference>
<dbReference type="FunFam" id="1.20.1740.10:FF:000006">
    <property type="entry name" value="General amino acid permease"/>
    <property type="match status" value="1"/>
</dbReference>
<dbReference type="Gene3D" id="1.20.1740.10">
    <property type="entry name" value="Amino acid/polyamine transporter I"/>
    <property type="match status" value="1"/>
</dbReference>
<dbReference type="InterPro" id="IPR004841">
    <property type="entry name" value="AA-permease/SLC12A_dom"/>
</dbReference>
<dbReference type="InterPro" id="IPR004840">
    <property type="entry name" value="Amino_acid_permease_CS"/>
</dbReference>
<dbReference type="InterPro" id="IPR004762">
    <property type="entry name" value="Amino_acid_permease_fungi"/>
</dbReference>
<dbReference type="InterPro" id="IPR050524">
    <property type="entry name" value="APC_YAT"/>
</dbReference>
<dbReference type="NCBIfam" id="TIGR00913">
    <property type="entry name" value="2A0310"/>
    <property type="match status" value="1"/>
</dbReference>
<dbReference type="PANTHER" id="PTHR43341">
    <property type="entry name" value="AMINO ACID PERMEASE"/>
    <property type="match status" value="1"/>
</dbReference>
<dbReference type="PANTHER" id="PTHR43341:SF36">
    <property type="entry name" value="PROLINE-SPECIFIC PERMEASE"/>
    <property type="match status" value="1"/>
</dbReference>
<dbReference type="Pfam" id="PF00324">
    <property type="entry name" value="AA_permease"/>
    <property type="match status" value="1"/>
</dbReference>
<dbReference type="PROSITE" id="PS00218">
    <property type="entry name" value="AMINO_ACID_PERMEASE_1"/>
    <property type="match status" value="1"/>
</dbReference>
<proteinExistence type="evidence at transcript level"/>
<protein>
    <recommendedName>
        <fullName>Proline-specific permease</fullName>
    </recommendedName>
</protein>
<keyword id="KW-0029">Amino-acid transport</keyword>
<keyword id="KW-0325">Glycoprotein</keyword>
<keyword id="KW-0472">Membrane</keyword>
<keyword id="KW-1185">Reference proteome</keyword>
<keyword id="KW-0812">Transmembrane</keyword>
<keyword id="KW-1133">Transmembrane helix</keyword>
<keyword id="KW-0813">Transport</keyword>
<organism>
    <name type="scientific">Saccharomyces cerevisiae (strain ATCC 204508 / S288c)</name>
    <name type="common">Baker's yeast</name>
    <dbReference type="NCBI Taxonomy" id="559292"/>
    <lineage>
        <taxon>Eukaryota</taxon>
        <taxon>Fungi</taxon>
        <taxon>Dikarya</taxon>
        <taxon>Ascomycota</taxon>
        <taxon>Saccharomycotina</taxon>
        <taxon>Saccharomycetes</taxon>
        <taxon>Saccharomycetales</taxon>
        <taxon>Saccharomycetaceae</taxon>
        <taxon>Saccharomyces</taxon>
    </lineage>
</organism>
<comment type="function">
    <text evidence="3">Required for high-affinity proline transport. May be responsible for proline recognition and probably also for proline translocation across the plasma membrane. Also functions as a non-specific GABA permease. Can also transport alanine and glycine.</text>
</comment>
<comment type="subcellular location">
    <subcellularLocation>
        <location>Membrane</location>
        <topology>Multi-pass membrane protein</topology>
    </subcellularLocation>
</comment>
<comment type="induction">
    <text>Requires the presence of GABA.</text>
</comment>
<comment type="similarity">
    <text evidence="4">Belongs to the amino acid-polyamine-organocation (APC) superfamily. YAT (TC 2.A.3.10) family.</text>
</comment>
<gene>
    <name type="primary">PUT4</name>
    <name type="ordered locus">YOR348C</name>
    <name type="ORF">O6345</name>
</gene>
<name>PUT4_YEAST</name>